<protein>
    <recommendedName>
        <fullName>Uncharacterized membrane protein ArfC</fullName>
    </recommendedName>
</protein>
<reference key="1">
    <citation type="journal article" date="2007" name="Proc. Natl. Acad. Sci. U.S.A.">
        <title>Genome plasticity of BCG and impact on vaccine efficacy.</title>
        <authorList>
            <person name="Brosch R."/>
            <person name="Gordon S.V."/>
            <person name="Garnier T."/>
            <person name="Eiglmeier K."/>
            <person name="Frigui W."/>
            <person name="Valenti P."/>
            <person name="Dos Santos S."/>
            <person name="Duthoy S."/>
            <person name="Lacroix C."/>
            <person name="Garcia-Pelayo C."/>
            <person name="Inwald J.K."/>
            <person name="Golby P."/>
            <person name="Garcia J.N."/>
            <person name="Hewinson R.G."/>
            <person name="Behr M.A."/>
            <person name="Quail M.A."/>
            <person name="Churcher C."/>
            <person name="Barrell B.G."/>
            <person name="Parkhill J."/>
            <person name="Cole S.T."/>
        </authorList>
    </citation>
    <scope>NUCLEOTIDE SEQUENCE [LARGE SCALE GENOMIC DNA]</scope>
    <source>
        <strain>BCG / Pasteur 1173P2</strain>
    </source>
</reference>
<reference key="2">
    <citation type="journal article" date="2011" name="Tuberculosis">
        <title>Expression of OmpATb is dependent on small membrane proteins in Mycobacterium bovis BCG.</title>
        <authorList>
            <person name="Veyron-Churlet R."/>
            <person name="Brust B."/>
            <person name="Kremer L."/>
            <person name="Blanc-Potard A.B."/>
        </authorList>
    </citation>
    <scope>FUNCTION</scope>
    <scope>SUBCELLULAR LOCATION</scope>
    <scope>INDUCTION</scope>
    <scope>DISRUPTION PHENOTYPE</scope>
    <source>
        <strain>BCG / Pasteur 1173P2</strain>
    </source>
</reference>
<proteinExistence type="evidence at transcript level"/>
<organism>
    <name type="scientific">Mycobacterium bovis (strain BCG / Pasteur 1173P2)</name>
    <dbReference type="NCBI Taxonomy" id="410289"/>
    <lineage>
        <taxon>Bacteria</taxon>
        <taxon>Bacillati</taxon>
        <taxon>Actinomycetota</taxon>
        <taxon>Actinomycetes</taxon>
        <taxon>Mycobacteriales</taxon>
        <taxon>Mycobacteriaceae</taxon>
        <taxon>Mycobacterium</taxon>
        <taxon>Mycobacterium tuberculosis complex</taxon>
    </lineage>
</organism>
<evidence type="ECO:0000250" key="1">
    <source>
        <dbReference type="UniProtKB" id="P9WJG5"/>
    </source>
</evidence>
<evidence type="ECO:0000255" key="2"/>
<evidence type="ECO:0000256" key="3">
    <source>
        <dbReference type="SAM" id="MobiDB-lite"/>
    </source>
</evidence>
<evidence type="ECO:0000269" key="4">
    <source>
    </source>
</evidence>
<evidence type="ECO:0000305" key="5"/>
<evidence type="ECO:0000305" key="6">
    <source>
    </source>
</evidence>
<comment type="function">
    <text evidence="1 4">Required for ammonia secretion (By similarity). Also required for wild-type expression of ArfA (PubMed:21802366).</text>
</comment>
<comment type="subcellular location">
    <subcellularLocation>
        <location evidence="6">Cell membrane</location>
        <topology evidence="6">Single-pass membrane protein</topology>
    </subcellularLocation>
</comment>
<comment type="induction">
    <text evidence="4">Expressed equally at pH 5.5 and 7.2. Part of the arfA-arfB-arfC operon.</text>
</comment>
<comment type="disruption phenotype">
    <text evidence="4">No effect of a single gene deletion on growth at pH 7.0 nor of whole-operon deletion on growth at pH 4.6, 5.5 or 7.2. No effect of whole-operon deletion on growth in macrophages. Loss of expression of ArfA.</text>
</comment>
<comment type="similarity">
    <text evidence="5">Belongs to the ArfC membrane protein family.</text>
</comment>
<keyword id="KW-1003">Cell membrane</keyword>
<keyword id="KW-0472">Membrane</keyword>
<keyword id="KW-0812">Transmembrane</keyword>
<keyword id="KW-1133">Transmembrane helix</keyword>
<feature type="chain" id="PRO_0000415887" description="Uncharacterized membrane protein ArfC">
    <location>
        <begin position="1"/>
        <end position="175"/>
    </location>
</feature>
<feature type="transmembrane region" description="Helical" evidence="2">
    <location>
        <begin position="4"/>
        <end position="26"/>
    </location>
</feature>
<feature type="region of interest" description="Disordered" evidence="3">
    <location>
        <begin position="36"/>
        <end position="93"/>
    </location>
</feature>
<gene>
    <name type="primary">arfC</name>
    <name type="ordered locus">BCG_0953</name>
</gene>
<dbReference type="EMBL" id="AM408590">
    <property type="protein sequence ID" value="CAL70939.1"/>
    <property type="molecule type" value="Genomic_DNA"/>
</dbReference>
<dbReference type="RefSeq" id="WP_003404688.1">
    <property type="nucleotide sequence ID" value="NC_008769.1"/>
</dbReference>
<dbReference type="SMR" id="A1KH33"/>
<dbReference type="KEGG" id="mbb:BCG_0953"/>
<dbReference type="HOGENOM" id="CLU_1523548_0_0_11"/>
<dbReference type="Proteomes" id="UP000001472">
    <property type="component" value="Chromosome"/>
</dbReference>
<dbReference type="GO" id="GO:0005886">
    <property type="term" value="C:plasma membrane"/>
    <property type="evidence" value="ECO:0007669"/>
    <property type="project" value="UniProtKB-SubCell"/>
</dbReference>
<sequence length="175" mass="18909">MEHVHWWLAGLAFTLGMVLTSTLMVRPVEHQVLVKKSVRGSSAKSKPPTARKPAVKSGTKREESPTAKTKVATESAAEQIPVAGEPAAEPIPVAGEPAARIPVVPYAPYGPGSARAGADGSGPQGWLVKGRSDTRLYYTPEDPTYDPTVAQVWFQDEESAARAFFTPWRKSTRRT</sequence>
<accession>A1KH33</accession>
<name>ARFC_MYCBP</name>